<proteinExistence type="inferred from homology"/>
<keyword id="KW-0963">Cytoplasm</keyword>
<keyword id="KW-0350">Heme biosynthesis</keyword>
<keyword id="KW-0408">Iron</keyword>
<keyword id="KW-0456">Lyase</keyword>
<keyword id="KW-0479">Metal-binding</keyword>
<keyword id="KW-0627">Porphyrin biosynthesis</keyword>
<keyword id="KW-1185">Reference proteome</keyword>
<accession>Q83FJ2</accession>
<protein>
    <recommendedName>
        <fullName evidence="1">Coproporphyrin III ferrochelatase</fullName>
        <ecNumber evidence="1">4.99.1.9</ecNumber>
    </recommendedName>
</protein>
<dbReference type="EC" id="4.99.1.9" evidence="1"/>
<dbReference type="EMBL" id="AE014184">
    <property type="protein sequence ID" value="AAO44830.1"/>
    <property type="molecule type" value="Genomic_DNA"/>
</dbReference>
<dbReference type="RefSeq" id="WP_011096684.1">
    <property type="nucleotide sequence ID" value="NC_004572.3"/>
</dbReference>
<dbReference type="SMR" id="Q83FJ2"/>
<dbReference type="STRING" id="203267.TWT_733"/>
<dbReference type="KEGG" id="twh:TWT_733"/>
<dbReference type="eggNOG" id="COG0276">
    <property type="taxonomic scope" value="Bacteria"/>
</dbReference>
<dbReference type="HOGENOM" id="CLU_018884_2_0_11"/>
<dbReference type="OrthoDB" id="9776380at2"/>
<dbReference type="UniPathway" id="UPA00252"/>
<dbReference type="Proteomes" id="UP000002200">
    <property type="component" value="Chromosome"/>
</dbReference>
<dbReference type="GO" id="GO:0005737">
    <property type="term" value="C:cytoplasm"/>
    <property type="evidence" value="ECO:0007669"/>
    <property type="project" value="UniProtKB-SubCell"/>
</dbReference>
<dbReference type="GO" id="GO:0004325">
    <property type="term" value="F:ferrochelatase activity"/>
    <property type="evidence" value="ECO:0007669"/>
    <property type="project" value="UniProtKB-UniRule"/>
</dbReference>
<dbReference type="GO" id="GO:0046872">
    <property type="term" value="F:metal ion binding"/>
    <property type="evidence" value="ECO:0007669"/>
    <property type="project" value="UniProtKB-KW"/>
</dbReference>
<dbReference type="GO" id="GO:0006783">
    <property type="term" value="P:heme biosynthetic process"/>
    <property type="evidence" value="ECO:0007669"/>
    <property type="project" value="UniProtKB-UniRule"/>
</dbReference>
<dbReference type="CDD" id="cd00419">
    <property type="entry name" value="Ferrochelatase_C"/>
    <property type="match status" value="1"/>
</dbReference>
<dbReference type="CDD" id="cd03411">
    <property type="entry name" value="Ferrochelatase_N"/>
    <property type="match status" value="1"/>
</dbReference>
<dbReference type="Gene3D" id="3.40.50.1400">
    <property type="match status" value="2"/>
</dbReference>
<dbReference type="HAMAP" id="MF_00323">
    <property type="entry name" value="Ferrochelatase"/>
    <property type="match status" value="1"/>
</dbReference>
<dbReference type="InterPro" id="IPR001015">
    <property type="entry name" value="Ferrochelatase"/>
</dbReference>
<dbReference type="InterPro" id="IPR019772">
    <property type="entry name" value="Ferrochelatase_AS"/>
</dbReference>
<dbReference type="InterPro" id="IPR033644">
    <property type="entry name" value="Ferrochelatase_C"/>
</dbReference>
<dbReference type="InterPro" id="IPR033659">
    <property type="entry name" value="Ferrochelatase_N"/>
</dbReference>
<dbReference type="NCBIfam" id="NF000689">
    <property type="entry name" value="PRK00035.2-1"/>
    <property type="match status" value="1"/>
</dbReference>
<dbReference type="PANTHER" id="PTHR11108">
    <property type="entry name" value="FERROCHELATASE"/>
    <property type="match status" value="1"/>
</dbReference>
<dbReference type="PANTHER" id="PTHR11108:SF1">
    <property type="entry name" value="FERROCHELATASE, MITOCHONDRIAL"/>
    <property type="match status" value="1"/>
</dbReference>
<dbReference type="Pfam" id="PF00762">
    <property type="entry name" value="Ferrochelatase"/>
    <property type="match status" value="1"/>
</dbReference>
<dbReference type="SUPFAM" id="SSF53800">
    <property type="entry name" value="Chelatase"/>
    <property type="match status" value="1"/>
</dbReference>
<dbReference type="PROSITE" id="PS00534">
    <property type="entry name" value="FERROCHELATASE"/>
    <property type="match status" value="1"/>
</dbReference>
<comment type="function">
    <text evidence="1">Involved in coproporphyrin-dependent heme b biosynthesis. Catalyzes the insertion of ferrous iron into coproporphyrin III to form Fe-coproporphyrin III.</text>
</comment>
<comment type="catalytic activity">
    <reaction evidence="1">
        <text>Fe-coproporphyrin III + 2 H(+) = coproporphyrin III + Fe(2+)</text>
        <dbReference type="Rhea" id="RHEA:49572"/>
        <dbReference type="ChEBI" id="CHEBI:15378"/>
        <dbReference type="ChEBI" id="CHEBI:29033"/>
        <dbReference type="ChEBI" id="CHEBI:68438"/>
        <dbReference type="ChEBI" id="CHEBI:131725"/>
        <dbReference type="EC" id="4.99.1.9"/>
    </reaction>
    <physiologicalReaction direction="right-to-left" evidence="1">
        <dbReference type="Rhea" id="RHEA:49574"/>
    </physiologicalReaction>
</comment>
<comment type="pathway">
    <text evidence="1">Porphyrin-containing compound metabolism; protoheme biosynthesis.</text>
</comment>
<comment type="subcellular location">
    <subcellularLocation>
        <location evidence="1">Cytoplasm</location>
    </subcellularLocation>
</comment>
<comment type="similarity">
    <text evidence="1">Belongs to the ferrochelatase family.</text>
</comment>
<organism>
    <name type="scientific">Tropheryma whipplei (strain Twist)</name>
    <name type="common">Whipple's bacillus</name>
    <dbReference type="NCBI Taxonomy" id="203267"/>
    <lineage>
        <taxon>Bacteria</taxon>
        <taxon>Bacillati</taxon>
        <taxon>Actinomycetota</taxon>
        <taxon>Actinomycetes</taxon>
        <taxon>Micrococcales</taxon>
        <taxon>Tropherymataceae</taxon>
        <taxon>Tropheryma</taxon>
    </lineage>
</organism>
<feature type="chain" id="PRO_0000175221" description="Coproporphyrin III ferrochelatase">
    <location>
        <begin position="1"/>
        <end position="391"/>
    </location>
</feature>
<feature type="binding site" evidence="1">
    <location>
        <position position="79"/>
    </location>
    <ligand>
        <name>Fe-coproporphyrin III</name>
        <dbReference type="ChEBI" id="CHEBI:68438"/>
    </ligand>
</feature>
<feature type="binding site" evidence="1">
    <location>
        <position position="148"/>
    </location>
    <ligand>
        <name>Fe-coproporphyrin III</name>
        <dbReference type="ChEBI" id="CHEBI:68438"/>
    </ligand>
</feature>
<feature type="binding site" evidence="1">
    <location>
        <position position="211"/>
    </location>
    <ligand>
        <name>Fe(2+)</name>
        <dbReference type="ChEBI" id="CHEBI:29033"/>
    </ligand>
</feature>
<feature type="binding site" evidence="1">
    <location>
        <position position="305"/>
    </location>
    <ligand>
        <name>Fe(2+)</name>
        <dbReference type="ChEBI" id="CHEBI:29033"/>
    </ligand>
</feature>
<gene>
    <name evidence="1" type="primary">cpfC</name>
    <name type="ordered locus">TWT_733</name>
</gene>
<sequence length="391" mass="43521">MIRRSAVSRVVAEGSAIASDSGFALGASQYDAVVLLSFGGPEGPEDVVPFLKKVTSGRGVPDERLYEVAEHYNHFSGISPINDCNRRLRGALEKELFSRGIRIPVLWANRNWQPQLEEVLREAYDRGFRAFLTLFTSAYSCYSSCRQYREDIAHAVERAGLSGRIIVDKLRQFFDHPGFVLPFIEGIQDCLEQVKERGFKVSRTAILFSTHSIPELDAAFSGPEDAHFGKYGAYVSQHKAVVEVIMSRLRVTDPDLQNYQLVYQSRSGDPSTPWLEPDINDAIRVLRGCEAVLIVPLGFISDHMEVLWDLDNESMQTARECGLFAIRTPTPGTHPLYISGMVDLIVERLEGVPRSARPAMTDLGPWFDVCQPGCCKNSRSGFKPAYGGVAP</sequence>
<name>CPFC_TROWT</name>
<reference key="1">
    <citation type="journal article" date="2003" name="Genome Res.">
        <title>Tropheryma whipplei twist: a human pathogenic Actinobacteria with a reduced genome.</title>
        <authorList>
            <person name="Raoult D."/>
            <person name="Ogata H."/>
            <person name="Audic S."/>
            <person name="Robert C."/>
            <person name="Suhre K."/>
            <person name="Drancourt M."/>
            <person name="Claverie J.-M."/>
        </authorList>
    </citation>
    <scope>NUCLEOTIDE SEQUENCE [LARGE SCALE GENOMIC DNA]</scope>
    <source>
        <strain>Twist</strain>
    </source>
</reference>
<evidence type="ECO:0000255" key="1">
    <source>
        <dbReference type="HAMAP-Rule" id="MF_00323"/>
    </source>
</evidence>